<gene>
    <name evidence="1" type="primary">coaE</name>
    <name type="ordered locus">BruAb1_2045</name>
</gene>
<evidence type="ECO:0000255" key="1">
    <source>
        <dbReference type="HAMAP-Rule" id="MF_00376"/>
    </source>
</evidence>
<feature type="chain" id="PRO_0000243265" description="Dephospho-CoA kinase">
    <location>
        <begin position="1"/>
        <end position="200"/>
    </location>
</feature>
<feature type="domain" description="DPCK" evidence="1">
    <location>
        <begin position="3"/>
        <end position="200"/>
    </location>
</feature>
<feature type="binding site" evidence="1">
    <location>
        <begin position="11"/>
        <end position="16"/>
    </location>
    <ligand>
        <name>ATP</name>
        <dbReference type="ChEBI" id="CHEBI:30616"/>
    </ligand>
</feature>
<protein>
    <recommendedName>
        <fullName evidence="1">Dephospho-CoA kinase</fullName>
        <ecNumber evidence="1">2.7.1.24</ecNumber>
    </recommendedName>
    <alternativeName>
        <fullName evidence="1">Dephosphocoenzyme A kinase</fullName>
    </alternativeName>
</protein>
<reference key="1">
    <citation type="journal article" date="2005" name="J. Bacteriol.">
        <title>Completion of the genome sequence of Brucella abortus and comparison to the highly similar genomes of Brucella melitensis and Brucella suis.</title>
        <authorList>
            <person name="Halling S.M."/>
            <person name="Peterson-Burch B.D."/>
            <person name="Bricker B.J."/>
            <person name="Zuerner R.L."/>
            <person name="Qing Z."/>
            <person name="Li L.-L."/>
            <person name="Kapur V."/>
            <person name="Alt D.P."/>
            <person name="Olsen S.C."/>
        </authorList>
    </citation>
    <scope>NUCLEOTIDE SEQUENCE [LARGE SCALE GENOMIC DNA]</scope>
    <source>
        <strain>9-941</strain>
    </source>
</reference>
<comment type="function">
    <text evidence="1">Catalyzes the phosphorylation of the 3'-hydroxyl group of dephosphocoenzyme A to form coenzyme A.</text>
</comment>
<comment type="catalytic activity">
    <reaction evidence="1">
        <text>3'-dephospho-CoA + ATP = ADP + CoA + H(+)</text>
        <dbReference type="Rhea" id="RHEA:18245"/>
        <dbReference type="ChEBI" id="CHEBI:15378"/>
        <dbReference type="ChEBI" id="CHEBI:30616"/>
        <dbReference type="ChEBI" id="CHEBI:57287"/>
        <dbReference type="ChEBI" id="CHEBI:57328"/>
        <dbReference type="ChEBI" id="CHEBI:456216"/>
        <dbReference type="EC" id="2.7.1.24"/>
    </reaction>
</comment>
<comment type="pathway">
    <text evidence="1">Cofactor biosynthesis; coenzyme A biosynthesis; CoA from (R)-pantothenate: step 5/5.</text>
</comment>
<comment type="subcellular location">
    <subcellularLocation>
        <location evidence="1">Cytoplasm</location>
    </subcellularLocation>
</comment>
<comment type="similarity">
    <text evidence="1">Belongs to the CoaE family.</text>
</comment>
<name>COAE_BRUAB</name>
<proteinExistence type="inferred from homology"/>
<organism>
    <name type="scientific">Brucella abortus biovar 1 (strain 9-941)</name>
    <dbReference type="NCBI Taxonomy" id="262698"/>
    <lineage>
        <taxon>Bacteria</taxon>
        <taxon>Pseudomonadati</taxon>
        <taxon>Pseudomonadota</taxon>
        <taxon>Alphaproteobacteria</taxon>
        <taxon>Hyphomicrobiales</taxon>
        <taxon>Brucellaceae</taxon>
        <taxon>Brucella/Ochrobactrum group</taxon>
        <taxon>Brucella</taxon>
    </lineage>
</organism>
<accession>Q57AI8</accession>
<dbReference type="EC" id="2.7.1.24" evidence="1"/>
<dbReference type="EMBL" id="AE017223">
    <property type="protein sequence ID" value="AAX75346.1"/>
    <property type="molecule type" value="Genomic_DNA"/>
</dbReference>
<dbReference type="RefSeq" id="WP_002965134.1">
    <property type="nucleotide sequence ID" value="NC_006932.1"/>
</dbReference>
<dbReference type="SMR" id="Q57AI8"/>
<dbReference type="EnsemblBacteria" id="AAX75346">
    <property type="protein sequence ID" value="AAX75346"/>
    <property type="gene ID" value="BruAb1_2045"/>
</dbReference>
<dbReference type="GeneID" id="93017619"/>
<dbReference type="KEGG" id="bmb:BruAb1_2045"/>
<dbReference type="HOGENOM" id="CLU_057180_3_0_5"/>
<dbReference type="UniPathway" id="UPA00241">
    <property type="reaction ID" value="UER00356"/>
</dbReference>
<dbReference type="Proteomes" id="UP000000540">
    <property type="component" value="Chromosome I"/>
</dbReference>
<dbReference type="GO" id="GO:0005737">
    <property type="term" value="C:cytoplasm"/>
    <property type="evidence" value="ECO:0007669"/>
    <property type="project" value="UniProtKB-SubCell"/>
</dbReference>
<dbReference type="GO" id="GO:0005524">
    <property type="term" value="F:ATP binding"/>
    <property type="evidence" value="ECO:0007669"/>
    <property type="project" value="UniProtKB-UniRule"/>
</dbReference>
<dbReference type="GO" id="GO:0004140">
    <property type="term" value="F:dephospho-CoA kinase activity"/>
    <property type="evidence" value="ECO:0007669"/>
    <property type="project" value="UniProtKB-UniRule"/>
</dbReference>
<dbReference type="GO" id="GO:0015937">
    <property type="term" value="P:coenzyme A biosynthetic process"/>
    <property type="evidence" value="ECO:0007669"/>
    <property type="project" value="UniProtKB-UniRule"/>
</dbReference>
<dbReference type="CDD" id="cd02022">
    <property type="entry name" value="DPCK"/>
    <property type="match status" value="1"/>
</dbReference>
<dbReference type="Gene3D" id="3.40.50.300">
    <property type="entry name" value="P-loop containing nucleotide triphosphate hydrolases"/>
    <property type="match status" value="1"/>
</dbReference>
<dbReference type="HAMAP" id="MF_00376">
    <property type="entry name" value="Dephospho_CoA_kinase"/>
    <property type="match status" value="1"/>
</dbReference>
<dbReference type="InterPro" id="IPR001977">
    <property type="entry name" value="Depp_CoAkinase"/>
</dbReference>
<dbReference type="InterPro" id="IPR027417">
    <property type="entry name" value="P-loop_NTPase"/>
</dbReference>
<dbReference type="NCBIfam" id="TIGR00152">
    <property type="entry name" value="dephospho-CoA kinase"/>
    <property type="match status" value="1"/>
</dbReference>
<dbReference type="PANTHER" id="PTHR10695:SF46">
    <property type="entry name" value="BIFUNCTIONAL COENZYME A SYNTHASE-RELATED"/>
    <property type="match status" value="1"/>
</dbReference>
<dbReference type="PANTHER" id="PTHR10695">
    <property type="entry name" value="DEPHOSPHO-COA KINASE-RELATED"/>
    <property type="match status" value="1"/>
</dbReference>
<dbReference type="Pfam" id="PF01121">
    <property type="entry name" value="CoaE"/>
    <property type="match status" value="1"/>
</dbReference>
<dbReference type="SUPFAM" id="SSF52540">
    <property type="entry name" value="P-loop containing nucleoside triphosphate hydrolases"/>
    <property type="match status" value="1"/>
</dbReference>
<dbReference type="PROSITE" id="PS51219">
    <property type="entry name" value="DPCK"/>
    <property type="match status" value="1"/>
</dbReference>
<sequence length="200" mass="21455">MIVLGLTGSIGMGKTTAAGMFAEAGVPVYSADDAVHRLYSGRAAPLIEATFPGTVENGIVNREKLFKAVIGQPEAIKKLEAVVHPLVREEEDAFRREAEKSGAAIALVDIPLLFETGAEKRVDKVVVVSAPADIQHTRVLARPGMTQEKLKAILLRQIPDAEKRSRADFVLDTSGSFDDLRRQIAEIITGLSGKPAAATR</sequence>
<keyword id="KW-0067">ATP-binding</keyword>
<keyword id="KW-0173">Coenzyme A biosynthesis</keyword>
<keyword id="KW-0963">Cytoplasm</keyword>
<keyword id="KW-0418">Kinase</keyword>
<keyword id="KW-0547">Nucleotide-binding</keyword>
<keyword id="KW-0808">Transferase</keyword>